<dbReference type="SMR" id="P0DL38"/>
<dbReference type="GO" id="GO:0005576">
    <property type="term" value="C:extracellular region"/>
    <property type="evidence" value="ECO:0007669"/>
    <property type="project" value="UniProtKB-SubCell"/>
</dbReference>
<dbReference type="GO" id="GO:0044231">
    <property type="term" value="C:host cell presynaptic membrane"/>
    <property type="evidence" value="ECO:0007669"/>
    <property type="project" value="UniProtKB-KW"/>
</dbReference>
<dbReference type="GO" id="GO:0005246">
    <property type="term" value="F:calcium channel regulator activity"/>
    <property type="evidence" value="ECO:0007669"/>
    <property type="project" value="UniProtKB-KW"/>
</dbReference>
<dbReference type="GO" id="GO:0017080">
    <property type="term" value="F:sodium channel regulator activity"/>
    <property type="evidence" value="ECO:0007669"/>
    <property type="project" value="UniProtKB-KW"/>
</dbReference>
<dbReference type="GO" id="GO:0090729">
    <property type="term" value="F:toxin activity"/>
    <property type="evidence" value="ECO:0007669"/>
    <property type="project" value="UniProtKB-KW"/>
</dbReference>
<name>TX21A_PLETR</name>
<protein>
    <recommendedName>
        <fullName evidence="4">Delta/omega-plectoxin-Pt1a</fullName>
        <shortName>Delta/omega-PLTX-Pt1a</shortName>
    </recommendedName>
</protein>
<feature type="signal peptide" evidence="2">
    <location>
        <begin position="1"/>
        <end position="20"/>
    </location>
</feature>
<feature type="propeptide" id="PRO_0000431731" evidence="3">
    <location>
        <begin position="21"/>
        <end position="34"/>
    </location>
</feature>
<feature type="chain" id="PRO_0000431732" description="Delta/omega-plectoxin-Pt1a">
    <location>
        <begin position="35"/>
        <end position="74"/>
    </location>
</feature>
<feature type="modified residue" description="Cysteine amide" evidence="3">
    <location>
        <position position="74"/>
    </location>
</feature>
<feature type="lipid moiety-binding region" description="O-palmitoyl serine" evidence="3">
    <location>
        <position position="73"/>
    </location>
</feature>
<feature type="disulfide bond" evidence="1">
    <location>
        <begin position="38"/>
        <end position="51"/>
    </location>
</feature>
<feature type="disulfide bond" evidence="1">
    <location>
        <begin position="45"/>
        <end position="57"/>
    </location>
</feature>
<feature type="disulfide bond" evidence="1">
    <location>
        <begin position="50"/>
        <end position="67"/>
    </location>
</feature>
<feature type="disulfide bond" evidence="1">
    <location>
        <begin position="54"/>
        <end position="74"/>
    </location>
</feature>
<feature type="disulfide bond" evidence="1">
    <location>
        <begin position="59"/>
        <end position="65"/>
    </location>
</feature>
<evidence type="ECO:0000250" key="1">
    <source>
        <dbReference type="UniProtKB" id="P36983"/>
    </source>
</evidence>
<evidence type="ECO:0000255" key="2"/>
<evidence type="ECO:0000269" key="3">
    <source>
    </source>
</evidence>
<evidence type="ECO:0000303" key="4">
    <source>
    </source>
</evidence>
<evidence type="ECO:0000305" key="5"/>
<evidence type="ECO:0000305" key="6">
    <source>
    </source>
</evidence>
<accession>P0DL38</accession>
<organism>
    <name type="scientific">Plectreurys tristis</name>
    <name type="common">Spider</name>
    <name type="synonym">Plectreurys bispinosus</name>
    <dbReference type="NCBI Taxonomy" id="33319"/>
    <lineage>
        <taxon>Eukaryota</taxon>
        <taxon>Metazoa</taxon>
        <taxon>Ecdysozoa</taxon>
        <taxon>Arthropoda</taxon>
        <taxon>Chelicerata</taxon>
        <taxon>Arachnida</taxon>
        <taxon>Araneae</taxon>
        <taxon>Araneomorphae</taxon>
        <taxon>Haplogynae</taxon>
        <taxon>Pholcoidea</taxon>
        <taxon>Plectreuridae</taxon>
        <taxon>Plectreurys</taxon>
    </lineage>
</organism>
<reference key="1">
    <citation type="journal article" date="2013" name="PLoS ONE">
        <title>delta/omega-Plectoxin-Pt1a: an excitatory spider toxin with actions on both Ca(2+) and Na(+) channels.</title>
        <authorList>
            <person name="Zhou Y."/>
            <person name="Zhao M."/>
            <person name="Fields G.B."/>
            <person name="Wu C.F."/>
            <person name="Branton W.D."/>
        </authorList>
    </citation>
    <scope>NUCLEOTIDE SEQUENCE [MRNA]</scope>
    <scope>PROTEIN SEQUENCE OF 35-72</scope>
    <scope>FUNCTION</scope>
    <scope>IDENTIFICATION BY MASS SPECTROMETRY</scope>
    <scope>SUBCELLULAR LOCATION</scope>
    <scope>PALMITOYLATION AT SER-73</scope>
    <scope>AMIDATION AT CYS-74</scope>
    <source>
        <tissue>Venom</tissue>
        <tissue>Venom gland</tissue>
    </source>
</reference>
<keyword id="KW-0027">Amidation</keyword>
<keyword id="KW-0108">Calcium channel impairing toxin</keyword>
<keyword id="KW-0903">Direct protein sequencing</keyword>
<keyword id="KW-1015">Disulfide bond</keyword>
<keyword id="KW-0872">Ion channel impairing toxin</keyword>
<keyword id="KW-0960">Knottin</keyword>
<keyword id="KW-0449">Lipoprotein</keyword>
<keyword id="KW-0528">Neurotoxin</keyword>
<keyword id="KW-0564">Palmitate</keyword>
<keyword id="KW-0638">Presynaptic neurotoxin</keyword>
<keyword id="KW-0964">Secreted</keyword>
<keyword id="KW-0732">Signal</keyword>
<keyword id="KW-0800">Toxin</keyword>
<keyword id="KW-0738">Voltage-gated sodium channel impairing toxin</keyword>
<comment type="function">
    <text evidence="3">Excitatory toxin that acts on both calcium and sodium (Nav) channels. It preferentially blocks a subset of calcium channels that is apparently not required for neurotransmitter release, it decreases threshold for sodium channel activation and it slows sodium channel inactivation. As it enhances synaptic transmission by prolonging presynaptic release of neurotransmitter, its effects on sodium and calcium channels may act synergistically to sustain the terminal excitability.</text>
</comment>
<comment type="subcellular location">
    <subcellularLocation>
        <location evidence="3">Secreted</location>
    </subcellularLocation>
</comment>
<comment type="tissue specificity">
    <text evidence="6">Expressed by the venom gland.</text>
</comment>
<comment type="domain">
    <text evidence="5">The presence of a 'disulfide through disulfide knot' structurally defines this protein as a knottin.</text>
</comment>
<comment type="miscellaneous">
    <text evidence="3">Negative results: has no significant effect on voltage-gated potassium current in Drosophila giant neurons.</text>
</comment>
<comment type="similarity">
    <text>Belongs to the neurotoxin 02 (plectoxin) family. 01 (Tx3) subfamily.</text>
</comment>
<sequence>MKHLIVAVVLLSALAICTSAEEEQVNVPFRPEERIGECAGWNDNCDKRSCCDQCHQCRCKFGSNCRCTGTKPSCGKR</sequence>
<proteinExistence type="evidence at protein level"/>